<sequence length="228" mass="23247">MDIERVEQVRAVERLAHRRGLALMPRAGLAAADFVAARLPAGAQVLALAGPGNNGGDALVAATLLQARGYRVAVVMPAGPARLPDDARRAWQDWCAAGGQASADLPAHAPALVIDGLFGIGLARPLDGAWQGLIDQVNAWRVPVLALDVPSGLSAASGQPLGDPPGRPVRATWTLSFIGVPAALRAPGAAAWCGEQYLSLLGLTPAFLAEAVGPCGQATATAARRSGP</sequence>
<keyword id="KW-0413">Isomerase</keyword>
<keyword id="KW-0479">Metal-binding</keyword>
<keyword id="KW-0520">NAD</keyword>
<keyword id="KW-0521">NADP</keyword>
<keyword id="KW-0547">Nucleotide-binding</keyword>
<keyword id="KW-0630">Potassium</keyword>
<keyword id="KW-1185">Reference proteome</keyword>
<name>NNRE_BORPE</name>
<protein>
    <recommendedName>
        <fullName evidence="1">NAD(P)H-hydrate epimerase</fullName>
        <ecNumber evidence="1">5.1.99.6</ecNumber>
    </recommendedName>
    <alternativeName>
        <fullName evidence="1">NAD(P)HX epimerase</fullName>
    </alternativeName>
</protein>
<proteinExistence type="inferred from homology"/>
<organism>
    <name type="scientific">Bordetella pertussis (strain Tohama I / ATCC BAA-589 / NCTC 13251)</name>
    <dbReference type="NCBI Taxonomy" id="257313"/>
    <lineage>
        <taxon>Bacteria</taxon>
        <taxon>Pseudomonadati</taxon>
        <taxon>Pseudomonadota</taxon>
        <taxon>Betaproteobacteria</taxon>
        <taxon>Burkholderiales</taxon>
        <taxon>Alcaligenaceae</taxon>
        <taxon>Bordetella</taxon>
    </lineage>
</organism>
<feature type="chain" id="PRO_0000416346" description="NAD(P)H-hydrate epimerase">
    <location>
        <begin position="1"/>
        <end position="228"/>
    </location>
</feature>
<feature type="domain" description="YjeF N-terminal" evidence="1">
    <location>
        <begin position="9"/>
        <end position="209"/>
    </location>
</feature>
<feature type="binding site" evidence="1">
    <location>
        <begin position="53"/>
        <end position="57"/>
    </location>
    <ligand>
        <name>(6S)-NADPHX</name>
        <dbReference type="ChEBI" id="CHEBI:64076"/>
    </ligand>
</feature>
<feature type="binding site" evidence="1">
    <location>
        <position position="54"/>
    </location>
    <ligand>
        <name>K(+)</name>
        <dbReference type="ChEBI" id="CHEBI:29103"/>
    </ligand>
</feature>
<feature type="binding site" evidence="1">
    <location>
        <position position="115"/>
    </location>
    <ligand>
        <name>K(+)</name>
        <dbReference type="ChEBI" id="CHEBI:29103"/>
    </ligand>
</feature>
<feature type="binding site" evidence="1">
    <location>
        <begin position="119"/>
        <end position="125"/>
    </location>
    <ligand>
        <name>(6S)-NADPHX</name>
        <dbReference type="ChEBI" id="CHEBI:64076"/>
    </ligand>
</feature>
<feature type="binding site" evidence="1">
    <location>
        <position position="148"/>
    </location>
    <ligand>
        <name>(6S)-NADPHX</name>
        <dbReference type="ChEBI" id="CHEBI:64076"/>
    </ligand>
</feature>
<feature type="binding site" evidence="1">
    <location>
        <position position="151"/>
    </location>
    <ligand>
        <name>K(+)</name>
        <dbReference type="ChEBI" id="CHEBI:29103"/>
    </ligand>
</feature>
<dbReference type="EC" id="5.1.99.6" evidence="1"/>
<dbReference type="EMBL" id="BX640419">
    <property type="protein sequence ID" value="CAE42962.1"/>
    <property type="molecule type" value="Genomic_DNA"/>
</dbReference>
<dbReference type="RefSeq" id="NP_881298.1">
    <property type="nucleotide sequence ID" value="NC_002929.2"/>
</dbReference>
<dbReference type="RefSeq" id="WP_003813302.1">
    <property type="nucleotide sequence ID" value="NZ_CP039022.1"/>
</dbReference>
<dbReference type="SMR" id="Q7VVH8"/>
<dbReference type="STRING" id="257313.BP2686"/>
<dbReference type="PaxDb" id="257313-BP2686"/>
<dbReference type="KEGG" id="bpe:BP2686"/>
<dbReference type="PATRIC" id="fig|257313.5.peg.2893"/>
<dbReference type="eggNOG" id="COG0062">
    <property type="taxonomic scope" value="Bacteria"/>
</dbReference>
<dbReference type="HOGENOM" id="CLU_024853_0_2_4"/>
<dbReference type="Proteomes" id="UP000002676">
    <property type="component" value="Chromosome"/>
</dbReference>
<dbReference type="GO" id="GO:0046872">
    <property type="term" value="F:metal ion binding"/>
    <property type="evidence" value="ECO:0007669"/>
    <property type="project" value="UniProtKB-KW"/>
</dbReference>
<dbReference type="GO" id="GO:0052856">
    <property type="term" value="F:NAD(P)HX epimerase activity"/>
    <property type="evidence" value="ECO:0007669"/>
    <property type="project" value="UniProtKB-UniRule"/>
</dbReference>
<dbReference type="GO" id="GO:0000166">
    <property type="term" value="F:nucleotide binding"/>
    <property type="evidence" value="ECO:0007669"/>
    <property type="project" value="UniProtKB-KW"/>
</dbReference>
<dbReference type="Gene3D" id="3.40.50.10260">
    <property type="entry name" value="YjeF N-terminal domain"/>
    <property type="match status" value="1"/>
</dbReference>
<dbReference type="HAMAP" id="MF_01966">
    <property type="entry name" value="NADHX_epimerase"/>
    <property type="match status" value="1"/>
</dbReference>
<dbReference type="InterPro" id="IPR004443">
    <property type="entry name" value="YjeF_N_dom"/>
</dbReference>
<dbReference type="InterPro" id="IPR036652">
    <property type="entry name" value="YjeF_N_dom_sf"/>
</dbReference>
<dbReference type="NCBIfam" id="TIGR00197">
    <property type="entry name" value="yjeF_nterm"/>
    <property type="match status" value="1"/>
</dbReference>
<dbReference type="Pfam" id="PF03853">
    <property type="entry name" value="YjeF_N"/>
    <property type="match status" value="1"/>
</dbReference>
<dbReference type="SUPFAM" id="SSF64153">
    <property type="entry name" value="YjeF N-terminal domain-like"/>
    <property type="match status" value="1"/>
</dbReference>
<dbReference type="PROSITE" id="PS51385">
    <property type="entry name" value="YJEF_N"/>
    <property type="match status" value="1"/>
</dbReference>
<accession>Q7VVH8</accession>
<reference key="1">
    <citation type="journal article" date="2003" name="Nat. Genet.">
        <title>Comparative analysis of the genome sequences of Bordetella pertussis, Bordetella parapertussis and Bordetella bronchiseptica.</title>
        <authorList>
            <person name="Parkhill J."/>
            <person name="Sebaihia M."/>
            <person name="Preston A."/>
            <person name="Murphy L.D."/>
            <person name="Thomson N.R."/>
            <person name="Harris D.E."/>
            <person name="Holden M.T.G."/>
            <person name="Churcher C.M."/>
            <person name="Bentley S.D."/>
            <person name="Mungall K.L."/>
            <person name="Cerdeno-Tarraga A.-M."/>
            <person name="Temple L."/>
            <person name="James K.D."/>
            <person name="Harris B."/>
            <person name="Quail M.A."/>
            <person name="Achtman M."/>
            <person name="Atkin R."/>
            <person name="Baker S."/>
            <person name="Basham D."/>
            <person name="Bason N."/>
            <person name="Cherevach I."/>
            <person name="Chillingworth T."/>
            <person name="Collins M."/>
            <person name="Cronin A."/>
            <person name="Davis P."/>
            <person name="Doggett J."/>
            <person name="Feltwell T."/>
            <person name="Goble A."/>
            <person name="Hamlin N."/>
            <person name="Hauser H."/>
            <person name="Holroyd S."/>
            <person name="Jagels K."/>
            <person name="Leather S."/>
            <person name="Moule S."/>
            <person name="Norberczak H."/>
            <person name="O'Neil S."/>
            <person name="Ormond D."/>
            <person name="Price C."/>
            <person name="Rabbinowitsch E."/>
            <person name="Rutter S."/>
            <person name="Sanders M."/>
            <person name="Saunders D."/>
            <person name="Seeger K."/>
            <person name="Sharp S."/>
            <person name="Simmonds M."/>
            <person name="Skelton J."/>
            <person name="Squares R."/>
            <person name="Squares S."/>
            <person name="Stevens K."/>
            <person name="Unwin L."/>
            <person name="Whitehead S."/>
            <person name="Barrell B.G."/>
            <person name="Maskell D.J."/>
        </authorList>
    </citation>
    <scope>NUCLEOTIDE SEQUENCE [LARGE SCALE GENOMIC DNA]</scope>
    <source>
        <strain>Tohama I / ATCC BAA-589 / NCTC 13251</strain>
    </source>
</reference>
<evidence type="ECO:0000255" key="1">
    <source>
        <dbReference type="HAMAP-Rule" id="MF_01966"/>
    </source>
</evidence>
<gene>
    <name evidence="1" type="primary">nnrE</name>
    <name type="ordered locus">BP2686</name>
</gene>
<comment type="function">
    <text evidence="1">Catalyzes the epimerization of the S- and R-forms of NAD(P)HX, a damaged form of NAD(P)H that is a result of enzymatic or heat-dependent hydration. This is a prerequisite for the S-specific NAD(P)H-hydrate dehydratase to allow the repair of both epimers of NAD(P)HX.</text>
</comment>
<comment type="catalytic activity">
    <reaction evidence="1">
        <text>(6R)-NADHX = (6S)-NADHX</text>
        <dbReference type="Rhea" id="RHEA:32215"/>
        <dbReference type="ChEBI" id="CHEBI:64074"/>
        <dbReference type="ChEBI" id="CHEBI:64075"/>
        <dbReference type="EC" id="5.1.99.6"/>
    </reaction>
</comment>
<comment type="catalytic activity">
    <reaction evidence="1">
        <text>(6R)-NADPHX = (6S)-NADPHX</text>
        <dbReference type="Rhea" id="RHEA:32227"/>
        <dbReference type="ChEBI" id="CHEBI:64076"/>
        <dbReference type="ChEBI" id="CHEBI:64077"/>
        <dbReference type="EC" id="5.1.99.6"/>
    </reaction>
</comment>
<comment type="cofactor">
    <cofactor evidence="1">
        <name>K(+)</name>
        <dbReference type="ChEBI" id="CHEBI:29103"/>
    </cofactor>
    <text evidence="1">Binds 1 potassium ion per subunit.</text>
</comment>
<comment type="similarity">
    <text evidence="1">Belongs to the NnrE/AIBP family.</text>
</comment>